<comment type="function">
    <text evidence="1">Component of the PAN1 actin cytoskeleton-regulatory complex required for the internalization of endosomes during actin-coupled endocytosis. The complex links the site of endocytosis to the cell membrane-associated actin cytoskeleton. Mediates uptake of external molecules and vacuolar degradation of plasma membrane proteins. Plays a role in the proper organization of the cell membrane-associated actin cytoskeleton and promotes its destabilization (By similarity).</text>
</comment>
<comment type="subunit">
    <text evidence="1">Component of the PAN1 actin cytoskeleton-regulatory complex.</text>
</comment>
<comment type="subcellular location">
    <subcellularLocation>
        <location evidence="1">Cell membrane</location>
        <topology evidence="1">Peripheral membrane protein</topology>
        <orientation evidence="1">Cytoplasmic side</orientation>
    </subcellularLocation>
    <subcellularLocation>
        <location evidence="1">Endosome membrane</location>
        <topology evidence="1">Peripheral membrane protein</topology>
        <orientation evidence="1">Cytoplasmic side</orientation>
    </subcellularLocation>
    <subcellularLocation>
        <location evidence="1">Cytoplasm</location>
        <location evidence="1">Cytoskeleton</location>
        <location evidence="1">Actin patch</location>
    </subcellularLocation>
    <text evidence="1">Cytoplasmic and cortical actin patches.</text>
</comment>
<comment type="similarity">
    <text evidence="6">Belongs to the END3 family.</text>
</comment>
<comment type="sequence caution" evidence="6">
    <conflict type="erroneous initiation">
        <sequence resource="EMBL-CDS" id="CAG84817"/>
    </conflict>
</comment>
<name>END3_DEBHA</name>
<organism>
    <name type="scientific">Debaryomyces hansenii (strain ATCC 36239 / CBS 767 / BCRC 21394 / JCM 1990 / NBRC 0083 / IGC 2968)</name>
    <name type="common">Yeast</name>
    <name type="synonym">Torulaspora hansenii</name>
    <dbReference type="NCBI Taxonomy" id="284592"/>
    <lineage>
        <taxon>Eukaryota</taxon>
        <taxon>Fungi</taxon>
        <taxon>Dikarya</taxon>
        <taxon>Ascomycota</taxon>
        <taxon>Saccharomycotina</taxon>
        <taxon>Pichiomycetes</taxon>
        <taxon>Debaryomycetaceae</taxon>
        <taxon>Debaryomyces</taxon>
    </lineage>
</organism>
<feature type="chain" id="PRO_0000349447" description="Actin cytoskeleton-regulatory complex protein END3">
    <location>
        <begin position="1"/>
        <end position="393"/>
    </location>
</feature>
<feature type="domain" description="EH 1" evidence="3">
    <location>
        <begin position="8"/>
        <end position="98"/>
    </location>
</feature>
<feature type="domain" description="EF-hand" evidence="4">
    <location>
        <begin position="40"/>
        <end position="75"/>
    </location>
</feature>
<feature type="domain" description="EH 2" evidence="3">
    <location>
        <begin position="142"/>
        <end position="231"/>
    </location>
</feature>
<feature type="region of interest" description="Disordered" evidence="5">
    <location>
        <begin position="231"/>
        <end position="251"/>
    </location>
</feature>
<feature type="coiled-coil region" evidence="2">
    <location>
        <begin position="285"/>
        <end position="392"/>
    </location>
</feature>
<feature type="binding site" evidence="4">
    <location>
        <position position="53"/>
    </location>
    <ligand>
        <name>Ca(2+)</name>
        <dbReference type="ChEBI" id="CHEBI:29108"/>
    </ligand>
</feature>
<feature type="binding site" evidence="4">
    <location>
        <position position="55"/>
    </location>
    <ligand>
        <name>Ca(2+)</name>
        <dbReference type="ChEBI" id="CHEBI:29108"/>
    </ligand>
</feature>
<feature type="binding site" evidence="4">
    <location>
        <position position="57"/>
    </location>
    <ligand>
        <name>Ca(2+)</name>
        <dbReference type="ChEBI" id="CHEBI:29108"/>
    </ligand>
</feature>
<feature type="binding site" evidence="4">
    <location>
        <position position="59"/>
    </location>
    <ligand>
        <name>Ca(2+)</name>
        <dbReference type="ChEBI" id="CHEBI:29108"/>
    </ligand>
</feature>
<feature type="binding site" evidence="4">
    <location>
        <position position="64"/>
    </location>
    <ligand>
        <name>Ca(2+)</name>
        <dbReference type="ChEBI" id="CHEBI:29108"/>
    </ligand>
</feature>
<protein>
    <recommendedName>
        <fullName>Actin cytoskeleton-regulatory complex protein END3</fullName>
    </recommendedName>
    <alternativeName>
        <fullName>Endocytosis protein 3</fullName>
    </alternativeName>
</protein>
<reference key="1">
    <citation type="journal article" date="2004" name="Nature">
        <title>Genome evolution in yeasts.</title>
        <authorList>
            <person name="Dujon B."/>
            <person name="Sherman D."/>
            <person name="Fischer G."/>
            <person name="Durrens P."/>
            <person name="Casaregola S."/>
            <person name="Lafontaine I."/>
            <person name="de Montigny J."/>
            <person name="Marck C."/>
            <person name="Neuveglise C."/>
            <person name="Talla E."/>
            <person name="Goffard N."/>
            <person name="Frangeul L."/>
            <person name="Aigle M."/>
            <person name="Anthouard V."/>
            <person name="Babour A."/>
            <person name="Barbe V."/>
            <person name="Barnay S."/>
            <person name="Blanchin S."/>
            <person name="Beckerich J.-M."/>
            <person name="Beyne E."/>
            <person name="Bleykasten C."/>
            <person name="Boisrame A."/>
            <person name="Boyer J."/>
            <person name="Cattolico L."/>
            <person name="Confanioleri F."/>
            <person name="de Daruvar A."/>
            <person name="Despons L."/>
            <person name="Fabre E."/>
            <person name="Fairhead C."/>
            <person name="Ferry-Dumazet H."/>
            <person name="Groppi A."/>
            <person name="Hantraye F."/>
            <person name="Hennequin C."/>
            <person name="Jauniaux N."/>
            <person name="Joyet P."/>
            <person name="Kachouri R."/>
            <person name="Kerrest A."/>
            <person name="Koszul R."/>
            <person name="Lemaire M."/>
            <person name="Lesur I."/>
            <person name="Ma L."/>
            <person name="Muller H."/>
            <person name="Nicaud J.-M."/>
            <person name="Nikolski M."/>
            <person name="Oztas S."/>
            <person name="Ozier-Kalogeropoulos O."/>
            <person name="Pellenz S."/>
            <person name="Potier S."/>
            <person name="Richard G.-F."/>
            <person name="Straub M.-L."/>
            <person name="Suleau A."/>
            <person name="Swennen D."/>
            <person name="Tekaia F."/>
            <person name="Wesolowski-Louvel M."/>
            <person name="Westhof E."/>
            <person name="Wirth B."/>
            <person name="Zeniou-Meyer M."/>
            <person name="Zivanovic Y."/>
            <person name="Bolotin-Fukuhara M."/>
            <person name="Thierry A."/>
            <person name="Bouchier C."/>
            <person name="Caudron B."/>
            <person name="Scarpelli C."/>
            <person name="Gaillardin C."/>
            <person name="Weissenbach J."/>
            <person name="Wincker P."/>
            <person name="Souciet J.-L."/>
        </authorList>
    </citation>
    <scope>NUCLEOTIDE SEQUENCE [LARGE SCALE GENOMIC DNA]</scope>
    <source>
        <strain>ATCC 36239 / CBS 767 / BCRC 21394 / JCM 1990 / NBRC 0083 / IGC 2968</strain>
    </source>
</reference>
<evidence type="ECO:0000250" key="1"/>
<evidence type="ECO:0000255" key="2"/>
<evidence type="ECO:0000255" key="3">
    <source>
        <dbReference type="PROSITE-ProRule" id="PRU00077"/>
    </source>
</evidence>
<evidence type="ECO:0000255" key="4">
    <source>
        <dbReference type="PROSITE-ProRule" id="PRU00448"/>
    </source>
</evidence>
<evidence type="ECO:0000256" key="5">
    <source>
        <dbReference type="SAM" id="MobiDB-lite"/>
    </source>
</evidence>
<evidence type="ECO:0000305" key="6"/>
<proteinExistence type="inferred from homology"/>
<sequence length="393" mass="44779">MPRLEDWEIKKYWEIFQGLNPVDNKITGDKASTVLKNSRLKDDQLSQIWDLSDIDSDGKLDFEEFCITMRLIFDLVNGNQQSLPSELPSWLVPASKAHLIQANMAVTTGSNNYQTNNNTITDDDDEDESLSDDFDWYISPTDKSIYETIYDSNSDSYGRVKFDSLTGLYQTLSKVPRSDISSAWNLVNPKSFEAIDKDQVLVFLHILNQRENGKRIPRYVPASLRATFSKDTPSYDLNQAPSKPINSAPVNNKNSFANSYLNKIGHANNATNEKGTDFSATEGTDWEEVRLRRELANLEDLLSKASQKDHTSNKSDDSESAMIKYEYEQLLKYKTNILSELESGSNHNNSKDLGDAKNDIELIENQVTILEEFLNERQNELNKTNEEIRALRT</sequence>
<accession>Q6BY77</accession>
<dbReference type="EMBL" id="CR382133">
    <property type="protein sequence ID" value="CAG84817.2"/>
    <property type="status" value="ALT_INIT"/>
    <property type="molecule type" value="Genomic_DNA"/>
</dbReference>
<dbReference type="RefSeq" id="XP_456842.2">
    <property type="nucleotide sequence ID" value="XM_456842.2"/>
</dbReference>
<dbReference type="FunCoup" id="Q6BY77">
    <property type="interactions" value="129"/>
</dbReference>
<dbReference type="STRING" id="284592.Q6BY77"/>
<dbReference type="GeneID" id="2899459"/>
<dbReference type="KEGG" id="dha:DEHA2A11792g"/>
<dbReference type="eggNOG" id="KOG0998">
    <property type="taxonomic scope" value="Eukaryota"/>
</dbReference>
<dbReference type="HOGENOM" id="CLU_040829_0_0_1"/>
<dbReference type="InParanoid" id="Q6BY77"/>
<dbReference type="OMA" id="DWLIPES"/>
<dbReference type="OrthoDB" id="1716625at2759"/>
<dbReference type="Proteomes" id="UP000000599">
    <property type="component" value="Chromosome A"/>
</dbReference>
<dbReference type="GO" id="GO:0030479">
    <property type="term" value="C:actin cortical patch"/>
    <property type="evidence" value="ECO:0007669"/>
    <property type="project" value="UniProtKB-SubCell"/>
</dbReference>
<dbReference type="GO" id="GO:0010008">
    <property type="term" value="C:endosome membrane"/>
    <property type="evidence" value="ECO:0007669"/>
    <property type="project" value="UniProtKB-SubCell"/>
</dbReference>
<dbReference type="GO" id="GO:0005886">
    <property type="term" value="C:plasma membrane"/>
    <property type="evidence" value="ECO:0007669"/>
    <property type="project" value="UniProtKB-SubCell"/>
</dbReference>
<dbReference type="GO" id="GO:0003779">
    <property type="term" value="F:actin binding"/>
    <property type="evidence" value="ECO:0007669"/>
    <property type="project" value="UniProtKB-KW"/>
</dbReference>
<dbReference type="GO" id="GO:0005509">
    <property type="term" value="F:calcium ion binding"/>
    <property type="evidence" value="ECO:0007669"/>
    <property type="project" value="InterPro"/>
</dbReference>
<dbReference type="GO" id="GO:0007015">
    <property type="term" value="P:actin filament organization"/>
    <property type="evidence" value="ECO:0007669"/>
    <property type="project" value="InterPro"/>
</dbReference>
<dbReference type="GO" id="GO:0006897">
    <property type="term" value="P:endocytosis"/>
    <property type="evidence" value="ECO:0007669"/>
    <property type="project" value="UniProtKB-KW"/>
</dbReference>
<dbReference type="GO" id="GO:0016197">
    <property type="term" value="P:endosomal transport"/>
    <property type="evidence" value="ECO:0007669"/>
    <property type="project" value="TreeGrafter"/>
</dbReference>
<dbReference type="CDD" id="cd00052">
    <property type="entry name" value="EH"/>
    <property type="match status" value="1"/>
</dbReference>
<dbReference type="Gene3D" id="1.10.238.10">
    <property type="entry name" value="EF-hand"/>
    <property type="match status" value="2"/>
</dbReference>
<dbReference type="InterPro" id="IPR011992">
    <property type="entry name" value="EF-hand-dom_pair"/>
</dbReference>
<dbReference type="InterPro" id="IPR018247">
    <property type="entry name" value="EF_Hand_1_Ca_BS"/>
</dbReference>
<dbReference type="InterPro" id="IPR002048">
    <property type="entry name" value="EF_hand_dom"/>
</dbReference>
<dbReference type="InterPro" id="IPR000261">
    <property type="entry name" value="EH_dom"/>
</dbReference>
<dbReference type="InterPro" id="IPR025604">
    <property type="entry name" value="End3"/>
</dbReference>
<dbReference type="PANTHER" id="PTHR11216:SF74">
    <property type="entry name" value="ACTIN CYTOSKELETON-REGULATORY COMPLEX PROTEIN END3"/>
    <property type="match status" value="1"/>
</dbReference>
<dbReference type="PANTHER" id="PTHR11216">
    <property type="entry name" value="EH DOMAIN"/>
    <property type="match status" value="1"/>
</dbReference>
<dbReference type="Pfam" id="PF12763">
    <property type="entry name" value="EH"/>
    <property type="match status" value="1"/>
</dbReference>
<dbReference type="Pfam" id="PF12761">
    <property type="entry name" value="End3"/>
    <property type="match status" value="1"/>
</dbReference>
<dbReference type="SMART" id="SM00054">
    <property type="entry name" value="EFh"/>
    <property type="match status" value="1"/>
</dbReference>
<dbReference type="SMART" id="SM00027">
    <property type="entry name" value="EH"/>
    <property type="match status" value="2"/>
</dbReference>
<dbReference type="SUPFAM" id="SSF47473">
    <property type="entry name" value="EF-hand"/>
    <property type="match status" value="2"/>
</dbReference>
<dbReference type="PROSITE" id="PS00018">
    <property type="entry name" value="EF_HAND_1"/>
    <property type="match status" value="1"/>
</dbReference>
<dbReference type="PROSITE" id="PS50222">
    <property type="entry name" value="EF_HAND_2"/>
    <property type="match status" value="1"/>
</dbReference>
<dbReference type="PROSITE" id="PS50031">
    <property type="entry name" value="EH"/>
    <property type="match status" value="2"/>
</dbReference>
<gene>
    <name type="primary">END3</name>
    <name type="ordered locus">DEHA2A11792g</name>
</gene>
<keyword id="KW-0009">Actin-binding</keyword>
<keyword id="KW-0106">Calcium</keyword>
<keyword id="KW-1003">Cell membrane</keyword>
<keyword id="KW-0175">Coiled coil</keyword>
<keyword id="KW-0963">Cytoplasm</keyword>
<keyword id="KW-0206">Cytoskeleton</keyword>
<keyword id="KW-0254">Endocytosis</keyword>
<keyword id="KW-0967">Endosome</keyword>
<keyword id="KW-0472">Membrane</keyword>
<keyword id="KW-0479">Metal-binding</keyword>
<keyword id="KW-1185">Reference proteome</keyword>
<keyword id="KW-0677">Repeat</keyword>